<feature type="chain" id="PRO_0000128834" description="4-hydroxy-3-methylbut-2-enyl diphosphate reductase">
    <location>
        <begin position="1"/>
        <end position="314"/>
    </location>
</feature>
<feature type="active site" description="Proton donor" evidence="1">
    <location>
        <position position="126"/>
    </location>
</feature>
<feature type="binding site" evidence="1">
    <location>
        <position position="12"/>
    </location>
    <ligand>
        <name>[4Fe-4S] cluster</name>
        <dbReference type="ChEBI" id="CHEBI:49883"/>
    </ligand>
</feature>
<feature type="binding site" evidence="1">
    <location>
        <position position="41"/>
    </location>
    <ligand>
        <name>(2E)-4-hydroxy-3-methylbut-2-enyl diphosphate</name>
        <dbReference type="ChEBI" id="CHEBI:128753"/>
    </ligand>
</feature>
<feature type="binding site" evidence="1">
    <location>
        <position position="41"/>
    </location>
    <ligand>
        <name>dimethylallyl diphosphate</name>
        <dbReference type="ChEBI" id="CHEBI:57623"/>
    </ligand>
</feature>
<feature type="binding site" evidence="1">
    <location>
        <position position="41"/>
    </location>
    <ligand>
        <name>isopentenyl diphosphate</name>
        <dbReference type="ChEBI" id="CHEBI:128769"/>
    </ligand>
</feature>
<feature type="binding site" evidence="1">
    <location>
        <position position="74"/>
    </location>
    <ligand>
        <name>(2E)-4-hydroxy-3-methylbut-2-enyl diphosphate</name>
        <dbReference type="ChEBI" id="CHEBI:128753"/>
    </ligand>
</feature>
<feature type="binding site" evidence="1">
    <location>
        <position position="74"/>
    </location>
    <ligand>
        <name>dimethylallyl diphosphate</name>
        <dbReference type="ChEBI" id="CHEBI:57623"/>
    </ligand>
</feature>
<feature type="binding site" evidence="1">
    <location>
        <position position="74"/>
    </location>
    <ligand>
        <name>isopentenyl diphosphate</name>
        <dbReference type="ChEBI" id="CHEBI:128769"/>
    </ligand>
</feature>
<feature type="binding site" evidence="1">
    <location>
        <position position="96"/>
    </location>
    <ligand>
        <name>[4Fe-4S] cluster</name>
        <dbReference type="ChEBI" id="CHEBI:49883"/>
    </ligand>
</feature>
<feature type="binding site" evidence="1">
    <location>
        <position position="124"/>
    </location>
    <ligand>
        <name>(2E)-4-hydroxy-3-methylbut-2-enyl diphosphate</name>
        <dbReference type="ChEBI" id="CHEBI:128753"/>
    </ligand>
</feature>
<feature type="binding site" evidence="1">
    <location>
        <position position="124"/>
    </location>
    <ligand>
        <name>dimethylallyl diphosphate</name>
        <dbReference type="ChEBI" id="CHEBI:57623"/>
    </ligand>
</feature>
<feature type="binding site" evidence="1">
    <location>
        <position position="124"/>
    </location>
    <ligand>
        <name>isopentenyl diphosphate</name>
        <dbReference type="ChEBI" id="CHEBI:128769"/>
    </ligand>
</feature>
<feature type="binding site" evidence="1">
    <location>
        <position position="167"/>
    </location>
    <ligand>
        <name>(2E)-4-hydroxy-3-methylbut-2-enyl diphosphate</name>
        <dbReference type="ChEBI" id="CHEBI:128753"/>
    </ligand>
</feature>
<feature type="binding site" evidence="1">
    <location>
        <position position="197"/>
    </location>
    <ligand>
        <name>[4Fe-4S] cluster</name>
        <dbReference type="ChEBI" id="CHEBI:49883"/>
    </ligand>
</feature>
<feature type="binding site" evidence="1">
    <location>
        <position position="225"/>
    </location>
    <ligand>
        <name>(2E)-4-hydroxy-3-methylbut-2-enyl diphosphate</name>
        <dbReference type="ChEBI" id="CHEBI:128753"/>
    </ligand>
</feature>
<feature type="binding site" evidence="1">
    <location>
        <position position="225"/>
    </location>
    <ligand>
        <name>dimethylallyl diphosphate</name>
        <dbReference type="ChEBI" id="CHEBI:57623"/>
    </ligand>
</feature>
<feature type="binding site" evidence="1">
    <location>
        <position position="225"/>
    </location>
    <ligand>
        <name>isopentenyl diphosphate</name>
        <dbReference type="ChEBI" id="CHEBI:128769"/>
    </ligand>
</feature>
<feature type="binding site" evidence="1">
    <location>
        <position position="226"/>
    </location>
    <ligand>
        <name>(2E)-4-hydroxy-3-methylbut-2-enyl diphosphate</name>
        <dbReference type="ChEBI" id="CHEBI:128753"/>
    </ligand>
</feature>
<feature type="binding site" evidence="1">
    <location>
        <position position="226"/>
    </location>
    <ligand>
        <name>dimethylallyl diphosphate</name>
        <dbReference type="ChEBI" id="CHEBI:57623"/>
    </ligand>
</feature>
<feature type="binding site" evidence="1">
    <location>
        <position position="226"/>
    </location>
    <ligand>
        <name>isopentenyl diphosphate</name>
        <dbReference type="ChEBI" id="CHEBI:128769"/>
    </ligand>
</feature>
<feature type="binding site" evidence="1">
    <location>
        <position position="227"/>
    </location>
    <ligand>
        <name>(2E)-4-hydroxy-3-methylbut-2-enyl diphosphate</name>
        <dbReference type="ChEBI" id="CHEBI:128753"/>
    </ligand>
</feature>
<feature type="binding site" evidence="1">
    <location>
        <position position="227"/>
    </location>
    <ligand>
        <name>dimethylallyl diphosphate</name>
        <dbReference type="ChEBI" id="CHEBI:57623"/>
    </ligand>
</feature>
<feature type="binding site" evidence="1">
    <location>
        <position position="227"/>
    </location>
    <ligand>
        <name>isopentenyl diphosphate</name>
        <dbReference type="ChEBI" id="CHEBI:128769"/>
    </ligand>
</feature>
<feature type="binding site" evidence="1">
    <location>
        <position position="269"/>
    </location>
    <ligand>
        <name>(2E)-4-hydroxy-3-methylbut-2-enyl diphosphate</name>
        <dbReference type="ChEBI" id="CHEBI:128753"/>
    </ligand>
</feature>
<feature type="binding site" evidence="1">
    <location>
        <position position="269"/>
    </location>
    <ligand>
        <name>dimethylallyl diphosphate</name>
        <dbReference type="ChEBI" id="CHEBI:57623"/>
    </ligand>
</feature>
<feature type="binding site" evidence="1">
    <location>
        <position position="269"/>
    </location>
    <ligand>
        <name>isopentenyl diphosphate</name>
        <dbReference type="ChEBI" id="CHEBI:128769"/>
    </ligand>
</feature>
<gene>
    <name evidence="1" type="primary">ispH</name>
    <name type="synonym">lytB</name>
    <name type="ordered locus">MS1749</name>
</gene>
<keyword id="KW-0004">4Fe-4S</keyword>
<keyword id="KW-0408">Iron</keyword>
<keyword id="KW-0411">Iron-sulfur</keyword>
<keyword id="KW-0414">Isoprene biosynthesis</keyword>
<keyword id="KW-0479">Metal-binding</keyword>
<keyword id="KW-0560">Oxidoreductase</keyword>
<name>ISPH_MANSM</name>
<proteinExistence type="inferred from homology"/>
<accession>Q65RQ4</accession>
<reference key="1">
    <citation type="journal article" date="2004" name="Nat. Biotechnol.">
        <title>The genome sequence of the capnophilic rumen bacterium Mannheimia succiniciproducens.</title>
        <authorList>
            <person name="Hong S.H."/>
            <person name="Kim J.S."/>
            <person name="Lee S.Y."/>
            <person name="In Y.H."/>
            <person name="Choi S.S."/>
            <person name="Rih J.-K."/>
            <person name="Kim C.H."/>
            <person name="Jeong H."/>
            <person name="Hur C.G."/>
            <person name="Kim J.J."/>
        </authorList>
    </citation>
    <scope>NUCLEOTIDE SEQUENCE [LARGE SCALE GENOMIC DNA]</scope>
    <source>
        <strain>KCTC 0769BP / MBEL55E</strain>
    </source>
</reference>
<protein>
    <recommendedName>
        <fullName evidence="1">4-hydroxy-3-methylbut-2-enyl diphosphate reductase</fullName>
        <shortName evidence="1">HMBPP reductase</shortName>
        <ecNumber evidence="1">1.17.7.4</ecNumber>
    </recommendedName>
</protein>
<organism>
    <name type="scientific">Mannheimia succiniciproducens (strain KCTC 0769BP / MBEL55E)</name>
    <dbReference type="NCBI Taxonomy" id="221988"/>
    <lineage>
        <taxon>Bacteria</taxon>
        <taxon>Pseudomonadati</taxon>
        <taxon>Pseudomonadota</taxon>
        <taxon>Gammaproteobacteria</taxon>
        <taxon>Pasteurellales</taxon>
        <taxon>Pasteurellaceae</taxon>
        <taxon>Basfia</taxon>
    </lineage>
</organism>
<sequence length="314" mass="34166">MKIILANPRGFCAGVDRAISIVELALEIHGAPIYVRHEVVHNRFVVNGLRERGAVFVEELNEVPDGAIVIFSAHGVSQAVRQEAKNRNLKVFDATCPLVTKVHMQVARASRKGTKAILIGHEGHPEVQGTMGQYDNPEGGIFLVENVEDIAKLGLKDNEELTFMTQTTLSIDDTSDVIVALKAKYPAIQGPRKNDICYATTNRQQAVRELAEQSDLVIVVGSKNSSNSNRLAELASRMGVPAKLIDDSNDIEPDWLKGINTIGVTAGASAPEVLVQSVIARLKELGVDSVEELEGCEENTVFEVPKELRIKEVG</sequence>
<comment type="function">
    <text evidence="1">Catalyzes the conversion of 1-hydroxy-2-methyl-2-(E)-butenyl 4-diphosphate (HMBPP) into a mixture of isopentenyl diphosphate (IPP) and dimethylallyl diphosphate (DMAPP). Acts in the terminal step of the DOXP/MEP pathway for isoprenoid precursor biosynthesis.</text>
</comment>
<comment type="catalytic activity">
    <reaction evidence="1">
        <text>isopentenyl diphosphate + 2 oxidized [2Fe-2S]-[ferredoxin] + H2O = (2E)-4-hydroxy-3-methylbut-2-enyl diphosphate + 2 reduced [2Fe-2S]-[ferredoxin] + 2 H(+)</text>
        <dbReference type="Rhea" id="RHEA:24488"/>
        <dbReference type="Rhea" id="RHEA-COMP:10000"/>
        <dbReference type="Rhea" id="RHEA-COMP:10001"/>
        <dbReference type="ChEBI" id="CHEBI:15377"/>
        <dbReference type="ChEBI" id="CHEBI:15378"/>
        <dbReference type="ChEBI" id="CHEBI:33737"/>
        <dbReference type="ChEBI" id="CHEBI:33738"/>
        <dbReference type="ChEBI" id="CHEBI:128753"/>
        <dbReference type="ChEBI" id="CHEBI:128769"/>
        <dbReference type="EC" id="1.17.7.4"/>
    </reaction>
</comment>
<comment type="catalytic activity">
    <reaction evidence="1">
        <text>dimethylallyl diphosphate + 2 oxidized [2Fe-2S]-[ferredoxin] + H2O = (2E)-4-hydroxy-3-methylbut-2-enyl diphosphate + 2 reduced [2Fe-2S]-[ferredoxin] + 2 H(+)</text>
        <dbReference type="Rhea" id="RHEA:24825"/>
        <dbReference type="Rhea" id="RHEA-COMP:10000"/>
        <dbReference type="Rhea" id="RHEA-COMP:10001"/>
        <dbReference type="ChEBI" id="CHEBI:15377"/>
        <dbReference type="ChEBI" id="CHEBI:15378"/>
        <dbReference type="ChEBI" id="CHEBI:33737"/>
        <dbReference type="ChEBI" id="CHEBI:33738"/>
        <dbReference type="ChEBI" id="CHEBI:57623"/>
        <dbReference type="ChEBI" id="CHEBI:128753"/>
        <dbReference type="EC" id="1.17.7.4"/>
    </reaction>
</comment>
<comment type="cofactor">
    <cofactor evidence="1">
        <name>[4Fe-4S] cluster</name>
        <dbReference type="ChEBI" id="CHEBI:49883"/>
    </cofactor>
    <text evidence="1">Binds 1 [4Fe-4S] cluster per subunit.</text>
</comment>
<comment type="pathway">
    <text evidence="1">Isoprenoid biosynthesis; dimethylallyl diphosphate biosynthesis; dimethylallyl diphosphate from (2E)-4-hydroxy-3-methylbutenyl diphosphate: step 1/1.</text>
</comment>
<comment type="pathway">
    <text evidence="1">Isoprenoid biosynthesis; isopentenyl diphosphate biosynthesis via DXP pathway; isopentenyl diphosphate from 1-deoxy-D-xylulose 5-phosphate: step 6/6.</text>
</comment>
<comment type="similarity">
    <text evidence="1">Belongs to the IspH family.</text>
</comment>
<dbReference type="EC" id="1.17.7.4" evidence="1"/>
<dbReference type="EMBL" id="AE016827">
    <property type="protein sequence ID" value="AAU38356.1"/>
    <property type="molecule type" value="Genomic_DNA"/>
</dbReference>
<dbReference type="RefSeq" id="WP_011200915.1">
    <property type="nucleotide sequence ID" value="NC_006300.1"/>
</dbReference>
<dbReference type="SMR" id="Q65RQ4"/>
<dbReference type="STRING" id="221988.MS1749"/>
<dbReference type="KEGG" id="msu:MS1749"/>
<dbReference type="eggNOG" id="COG0761">
    <property type="taxonomic scope" value="Bacteria"/>
</dbReference>
<dbReference type="HOGENOM" id="CLU_027486_1_1_6"/>
<dbReference type="OrthoDB" id="9804068at2"/>
<dbReference type="UniPathway" id="UPA00056">
    <property type="reaction ID" value="UER00097"/>
</dbReference>
<dbReference type="UniPathway" id="UPA00059">
    <property type="reaction ID" value="UER00105"/>
</dbReference>
<dbReference type="Proteomes" id="UP000000607">
    <property type="component" value="Chromosome"/>
</dbReference>
<dbReference type="GO" id="GO:0051539">
    <property type="term" value="F:4 iron, 4 sulfur cluster binding"/>
    <property type="evidence" value="ECO:0007669"/>
    <property type="project" value="UniProtKB-UniRule"/>
</dbReference>
<dbReference type="GO" id="GO:0051745">
    <property type="term" value="F:4-hydroxy-3-methylbut-2-enyl diphosphate reductase activity"/>
    <property type="evidence" value="ECO:0007669"/>
    <property type="project" value="UniProtKB-UniRule"/>
</dbReference>
<dbReference type="GO" id="GO:0046872">
    <property type="term" value="F:metal ion binding"/>
    <property type="evidence" value="ECO:0007669"/>
    <property type="project" value="UniProtKB-KW"/>
</dbReference>
<dbReference type="GO" id="GO:0050992">
    <property type="term" value="P:dimethylallyl diphosphate biosynthetic process"/>
    <property type="evidence" value="ECO:0007669"/>
    <property type="project" value="UniProtKB-UniRule"/>
</dbReference>
<dbReference type="GO" id="GO:0019288">
    <property type="term" value="P:isopentenyl diphosphate biosynthetic process, methylerythritol 4-phosphate pathway"/>
    <property type="evidence" value="ECO:0007669"/>
    <property type="project" value="UniProtKB-UniRule"/>
</dbReference>
<dbReference type="GO" id="GO:0016114">
    <property type="term" value="P:terpenoid biosynthetic process"/>
    <property type="evidence" value="ECO:0007669"/>
    <property type="project" value="UniProtKB-UniRule"/>
</dbReference>
<dbReference type="CDD" id="cd13944">
    <property type="entry name" value="lytB_ispH"/>
    <property type="match status" value="1"/>
</dbReference>
<dbReference type="Gene3D" id="3.40.50.11270">
    <property type="match status" value="1"/>
</dbReference>
<dbReference type="Gene3D" id="3.40.1010.20">
    <property type="entry name" value="4-hydroxy-3-methylbut-2-enyl diphosphate reductase, catalytic domain"/>
    <property type="match status" value="2"/>
</dbReference>
<dbReference type="HAMAP" id="MF_00191">
    <property type="entry name" value="IspH"/>
    <property type="match status" value="1"/>
</dbReference>
<dbReference type="InterPro" id="IPR003451">
    <property type="entry name" value="LytB/IspH"/>
</dbReference>
<dbReference type="NCBIfam" id="TIGR00216">
    <property type="entry name" value="ispH_lytB"/>
    <property type="match status" value="1"/>
</dbReference>
<dbReference type="NCBIfam" id="NF002188">
    <property type="entry name" value="PRK01045.1-2"/>
    <property type="match status" value="1"/>
</dbReference>
<dbReference type="NCBIfam" id="NF002190">
    <property type="entry name" value="PRK01045.1-4"/>
    <property type="match status" value="1"/>
</dbReference>
<dbReference type="PANTHER" id="PTHR30426">
    <property type="entry name" value="4-HYDROXY-3-METHYLBUT-2-ENYL DIPHOSPHATE REDUCTASE"/>
    <property type="match status" value="1"/>
</dbReference>
<dbReference type="PANTHER" id="PTHR30426:SF0">
    <property type="entry name" value="4-HYDROXY-3-METHYLBUT-2-ENYL DIPHOSPHATE REDUCTASE"/>
    <property type="match status" value="1"/>
</dbReference>
<dbReference type="Pfam" id="PF02401">
    <property type="entry name" value="LYTB"/>
    <property type="match status" value="1"/>
</dbReference>
<evidence type="ECO:0000255" key="1">
    <source>
        <dbReference type="HAMAP-Rule" id="MF_00191"/>
    </source>
</evidence>